<evidence type="ECO:0000250" key="1">
    <source>
        <dbReference type="UniProtKB" id="P38862"/>
    </source>
</evidence>
<evidence type="ECO:0000256" key="2">
    <source>
        <dbReference type="SAM" id="MobiDB-lite"/>
    </source>
</evidence>
<evidence type="ECO:0000269" key="3">
    <source>
    </source>
</evidence>
<evidence type="ECO:0000303" key="4">
    <source>
    </source>
</evidence>
<evidence type="ECO:0000305" key="5"/>
<dbReference type="EMBL" id="KB707707">
    <property type="protein sequence ID" value="EMR90329.1"/>
    <property type="molecule type" value="Genomic_DNA"/>
</dbReference>
<dbReference type="SMR" id="M7U9B9"/>
<dbReference type="STRING" id="1290391.M7U9B9"/>
<dbReference type="HOGENOM" id="CLU_012998_2_1_1"/>
<dbReference type="OrthoDB" id="34468at5178"/>
<dbReference type="Proteomes" id="UP000012045">
    <property type="component" value="Unassembled WGS sequence"/>
</dbReference>
<dbReference type="GO" id="GO:0000407">
    <property type="term" value="C:phagophore assembly site"/>
    <property type="evidence" value="ECO:0007669"/>
    <property type="project" value="UniProtKB-SubCell"/>
</dbReference>
<dbReference type="GO" id="GO:0019778">
    <property type="term" value="F:Atg12 activating enzyme activity"/>
    <property type="evidence" value="ECO:0007669"/>
    <property type="project" value="TreeGrafter"/>
</dbReference>
<dbReference type="GO" id="GO:0019779">
    <property type="term" value="F:Atg8 activating enzyme activity"/>
    <property type="evidence" value="ECO:0007669"/>
    <property type="project" value="TreeGrafter"/>
</dbReference>
<dbReference type="GO" id="GO:0000045">
    <property type="term" value="P:autophagosome assembly"/>
    <property type="evidence" value="ECO:0007669"/>
    <property type="project" value="TreeGrafter"/>
</dbReference>
<dbReference type="GO" id="GO:0000422">
    <property type="term" value="P:autophagy of mitochondrion"/>
    <property type="evidence" value="ECO:0007669"/>
    <property type="project" value="TreeGrafter"/>
</dbReference>
<dbReference type="GO" id="GO:0006995">
    <property type="term" value="P:cellular response to nitrogen starvation"/>
    <property type="evidence" value="ECO:0007669"/>
    <property type="project" value="TreeGrafter"/>
</dbReference>
<dbReference type="GO" id="GO:0034727">
    <property type="term" value="P:piecemeal microautophagy of the nucleus"/>
    <property type="evidence" value="ECO:0007669"/>
    <property type="project" value="TreeGrafter"/>
</dbReference>
<dbReference type="GO" id="GO:0032446">
    <property type="term" value="P:protein modification by small protein conjugation"/>
    <property type="evidence" value="ECO:0007669"/>
    <property type="project" value="TreeGrafter"/>
</dbReference>
<dbReference type="GO" id="GO:0015031">
    <property type="term" value="P:protein transport"/>
    <property type="evidence" value="ECO:0007669"/>
    <property type="project" value="UniProtKB-KW"/>
</dbReference>
<dbReference type="CDD" id="cd01486">
    <property type="entry name" value="Apg7"/>
    <property type="match status" value="1"/>
</dbReference>
<dbReference type="FunFam" id="3.40.140.100:FF:000003">
    <property type="entry name" value="Autophagy ubiquitin-activating enzyme ApgG"/>
    <property type="match status" value="1"/>
</dbReference>
<dbReference type="FunFam" id="3.40.50.720:FF:000243">
    <property type="entry name" value="Ubiquitin-like modifier-activating enzyme ATG7"/>
    <property type="match status" value="1"/>
</dbReference>
<dbReference type="FunFam" id="3.40.140.70:FF:000001">
    <property type="entry name" value="Ubiquitin-like modifier-activating enzyme atg7"/>
    <property type="match status" value="1"/>
</dbReference>
<dbReference type="Gene3D" id="3.40.50.720">
    <property type="entry name" value="NAD(P)-binding Rossmann-like Domain"/>
    <property type="match status" value="1"/>
</dbReference>
<dbReference type="Gene3D" id="3.40.140.100">
    <property type="entry name" value="Ubiquitin-like modifier-activating enzyme ATG7 C-terminal domain"/>
    <property type="match status" value="1"/>
</dbReference>
<dbReference type="Gene3D" id="3.40.140.70">
    <property type="entry name" value="Ubiquitin-like modifier-activating enzyme ATG7 N-terminal domain"/>
    <property type="match status" value="1"/>
</dbReference>
<dbReference type="InterPro" id="IPR006285">
    <property type="entry name" value="Atg7"/>
</dbReference>
<dbReference type="InterPro" id="IPR032197">
    <property type="entry name" value="Atg7_N"/>
</dbReference>
<dbReference type="InterPro" id="IPR042522">
    <property type="entry name" value="Atg7_N_1"/>
</dbReference>
<dbReference type="InterPro" id="IPR042523">
    <property type="entry name" value="Atg7_N_2"/>
</dbReference>
<dbReference type="InterPro" id="IPR045886">
    <property type="entry name" value="ThiF/MoeB/HesA"/>
</dbReference>
<dbReference type="InterPro" id="IPR000594">
    <property type="entry name" value="ThiF_NAD_FAD-bd"/>
</dbReference>
<dbReference type="InterPro" id="IPR035985">
    <property type="entry name" value="Ubiquitin-activating_enz"/>
</dbReference>
<dbReference type="NCBIfam" id="TIGR01381">
    <property type="entry name" value="E1_like_apg7"/>
    <property type="match status" value="1"/>
</dbReference>
<dbReference type="PANTHER" id="PTHR10953">
    <property type="entry name" value="UBIQUITIN-ACTIVATING ENZYME E1"/>
    <property type="match status" value="1"/>
</dbReference>
<dbReference type="PANTHER" id="PTHR10953:SF3">
    <property type="entry name" value="UBIQUITIN-LIKE MODIFIER-ACTIVATING ENZYME ATG7"/>
    <property type="match status" value="1"/>
</dbReference>
<dbReference type="Pfam" id="PF16420">
    <property type="entry name" value="ATG7_N"/>
    <property type="match status" value="1"/>
</dbReference>
<dbReference type="Pfam" id="PF00899">
    <property type="entry name" value="ThiF"/>
    <property type="match status" value="1"/>
</dbReference>
<dbReference type="SUPFAM" id="SSF69572">
    <property type="entry name" value="Activating enzymes of the ubiquitin-like proteins"/>
    <property type="match status" value="1"/>
</dbReference>
<gene>
    <name evidence="4" type="primary">atg7</name>
    <name type="ORF">BcDW1_1144</name>
</gene>
<keyword id="KW-0072">Autophagy</keyword>
<keyword id="KW-0963">Cytoplasm</keyword>
<keyword id="KW-0653">Protein transport</keyword>
<keyword id="KW-0813">Transport</keyword>
<keyword id="KW-0833">Ubl conjugation pathway</keyword>
<accession>M7U9B9</accession>
<comment type="function">
    <text evidence="1 3">E1-like activating enzyme involved in the 2 ubiquitin-like systems required for cytoplasm to vacuole transport (Cvt) and autophagy (PubMed:29417220). Activates ATG12 for its conjugation with ATG5 and ATG8 for its conjugation with phosphatidylethanolamine (By similarity). Both systems are needed for the ATG8 association to Cvt vesicles and autophagosomes membranes (By similarity). Autophagy is essential for maintenance of amino acid levels and protein synthesis under nitrogen starvation. Required for selective autophagic degradation of the nucleus (nucleophagy) as well as for mitophagy which contributes to regulate mitochondrial quantity and quality by eliminating the mitochondria to a basal level to fulfill cellular energy requirements and preventing excess ROS production (By similarity). Required for normal mycelial growth and conidiogenesis, and regulates sclerotial formation (PubMed:29417220). Plays an essential role in pathogenesis (PubMed:29417220).</text>
</comment>
<comment type="subunit">
    <text evidence="1 3">Homodimer (By similarity). Interacts with ATG8 through a thioester bond between Cys-616 and the C-terminal Gly of ATG8 and with ATG12 through a thioester bond between Cys-616 and the C-terminal Gly of ATG12 (By similarity). Also interacts with ATG3 (PubMed:29417220).</text>
</comment>
<comment type="subcellular location">
    <subcellularLocation>
        <location evidence="3">Cytoplasm</location>
    </subcellularLocation>
    <subcellularLocation>
        <location evidence="3">Preautophagosomal structure</location>
    </subcellularLocation>
</comment>
<comment type="domain">
    <text evidence="1">The C-terminal residues 721 to 760 are required for homodimerization, as well as the interactions with ATG3, ATG8 and ATG12; and the C-terminal 17 residues are required for the ATG8 lipidation (By similarity).</text>
</comment>
<comment type="domain">
    <text evidence="1">The GxGxxG motif is important for the function, possibly through binding with ATP (By similarity).</text>
</comment>
<comment type="disruption phenotype">
    <text evidence="3">Blocks the autophagic process (PubMed:29417220). Leads to fewer aerial hyphae and slower mycelial growth rate and fails to produce any conidia (PubMed:29417220). Also reduces the production of sclerotia in cold environment (PubMed:29417220). Fails to infect wounded cucumber leaves and shows only slight virulence on wounded tomato and grape fruits (PubMed:29417220).</text>
</comment>
<comment type="similarity">
    <text evidence="5">Belongs to the ATG7 family.</text>
</comment>
<sequence>MNLPEYHRLAAYITSDHSQDYTQDTNVAFIEEGPWDGEEEELITSFSTVEDLYTAICVREDNNQLDMALKFAPFASEIELPFYTALSQLKIDHDKLDDSARPVLGLYEPRATQSPDQSSRMRVLGNALSSNEVPSGHIRAEGKIKNVNTIEDFKNMDKQAMLQTSAKQIWDAINDGTIYSIPSLLSSFTILSFANLKKYTFTYWFAFPALHSEPAWRKVEQPPKFSAEETTALTEELGTWRYSHDNREHGFFLAKRVYPSSEHPQDPESESTSDLPFKWVIGSLREFESGFFNGVDAKNQYVSFVDPSTYHENPGWMLRNLLVLVRRRYKLDKVQILCYRDNHAKRHVPQSLILILESIYDPEYQSTAPDQIPKVTGWERNSLGKLTAKVTNLAQYMDPAQLADQAVDLNLKLMKWRIAPELNLDAIKNTKCLLLGAGTLGTYVSRLLMGWGVRKITFVDNASVSFSNPVRQPLFDFKDCIDGGAKKAYRASEALQEIYPGVDSTGHVMAVPMLGHPITDEAATKMNFELLQKLIEDHDAIFLLMDTRESRWLPTVMGKAAGKIVMNAALGFDTYVVMRHGVTPEDGGPAALGCYFCNDVVAPSDSVKDQTLDQQCTVTRPGVAPEASSKLVELLASVLQHPLKGAAPAPKLSSNHQSGQLEFDRDPPNHPLGLVPHQIRGFLAAYKTMLISGPSYDCCSACSPKIVNAYKEDGWEFIKRALTEKDYITELSGLAEVQRKAEAAANDVEWDSDEEGMEDEEPELL</sequence>
<feature type="chain" id="PRO_0000443881" description="Ubiquitin-like modifier-activating enzyme atg7">
    <location>
        <begin position="1"/>
        <end position="765"/>
    </location>
</feature>
<feature type="region of interest" description="Disordered" evidence="2">
    <location>
        <begin position="646"/>
        <end position="670"/>
    </location>
</feature>
<feature type="region of interest" description="Homodimerization" evidence="1">
    <location>
        <begin position="721"/>
        <end position="760"/>
    </location>
</feature>
<feature type="region of interest" description="Disordered" evidence="2">
    <location>
        <begin position="744"/>
        <end position="765"/>
    </location>
</feature>
<feature type="short sequence motif" description="GXGXXG motif" evidence="1">
    <location>
        <begin position="436"/>
        <end position="441"/>
    </location>
</feature>
<feature type="compositionally biased region" description="Acidic residues" evidence="2">
    <location>
        <begin position="748"/>
        <end position="765"/>
    </location>
</feature>
<feature type="active site" description="Glycyl thioester intermediate" evidence="1">
    <location>
        <position position="616"/>
    </location>
</feature>
<name>ATG7_BOTF1</name>
<proteinExistence type="evidence at protein level"/>
<organism>
    <name type="scientific">Botryotinia fuckeliana (strain BcDW1)</name>
    <name type="common">Noble rot fungus</name>
    <name type="synonym">Botrytis cinerea</name>
    <dbReference type="NCBI Taxonomy" id="1290391"/>
    <lineage>
        <taxon>Eukaryota</taxon>
        <taxon>Fungi</taxon>
        <taxon>Dikarya</taxon>
        <taxon>Ascomycota</taxon>
        <taxon>Pezizomycotina</taxon>
        <taxon>Leotiomycetes</taxon>
        <taxon>Helotiales</taxon>
        <taxon>Sclerotiniaceae</taxon>
        <taxon>Botrytis</taxon>
    </lineage>
</organism>
<reference key="1">
    <citation type="journal article" date="2013" name="Genome Announc.">
        <title>Draft genome sequence of Botrytis cinerea BcDW1, inoculum for noble rot of grape berries.</title>
        <authorList>
            <person name="Blanco-Ulate B."/>
            <person name="Allen G."/>
            <person name="Powell A.L."/>
            <person name="Cantu D."/>
        </authorList>
    </citation>
    <scope>NUCLEOTIDE SEQUENCE [LARGE SCALE GENOMIC DNA]</scope>
    <source>
        <strain>BcDW1</strain>
    </source>
</reference>
<reference key="2">
    <citation type="journal article" date="2018" name="Curr. Genet.">
        <title>Ubiquitin-like activating enzymes BcAtg3 and BcAtg7 participate in development and pathogenesis of Botrytis cinerea.</title>
        <authorList>
            <person name="Ren W."/>
            <person name="Sang C."/>
            <person name="Shi D."/>
            <person name="Song X."/>
            <person name="Zhou M."/>
            <person name="Chen C."/>
        </authorList>
    </citation>
    <scope>FUNCTION</scope>
    <scope>DISRUPTION PHENOTYPE</scope>
    <scope>INTERACTION WITH ATG7</scope>
    <scope>SUBCELLULAR LOCATION</scope>
</reference>
<protein>
    <recommendedName>
        <fullName evidence="4">Ubiquitin-like modifier-activating enzyme atg7</fullName>
    </recommendedName>
    <alternativeName>
        <fullName evidence="4">ATG12-activating enzyme E1 atg7</fullName>
    </alternativeName>
    <alternativeName>
        <fullName evidence="4">Autophagy-related protein 7</fullName>
    </alternativeName>
</protein>